<keyword id="KW-0329">Glyoxylate bypass</keyword>
<keyword id="KW-0456">Lyase</keyword>
<keyword id="KW-0460">Magnesium</keyword>
<keyword id="KW-0479">Metal-binding</keyword>
<keyword id="KW-1185">Reference proteome</keyword>
<keyword id="KW-0816">Tricarboxylic acid cycle</keyword>
<organism>
    <name type="scientific">Escherichia coli O6:H1 (strain CFT073 / ATCC 700928 / UPEC)</name>
    <dbReference type="NCBI Taxonomy" id="199310"/>
    <lineage>
        <taxon>Bacteria</taxon>
        <taxon>Pseudomonadati</taxon>
        <taxon>Pseudomonadota</taxon>
        <taxon>Gammaproteobacteria</taxon>
        <taxon>Enterobacterales</taxon>
        <taxon>Enterobacteriaceae</taxon>
        <taxon>Escherichia</taxon>
    </lineage>
</organism>
<comment type="function">
    <text evidence="1">Involved in the metabolic adaptation in response to environmental changes. Catalyzes the reversible formation of succinate and glyoxylate from isocitrate, a key step of the glyoxylate cycle, which operates as an anaplerotic route for replenishing the tricarboxylic acid cycle during growth on fatty acid substrates.</text>
</comment>
<comment type="catalytic activity">
    <reaction evidence="1">
        <text>D-threo-isocitrate = glyoxylate + succinate</text>
        <dbReference type="Rhea" id="RHEA:13245"/>
        <dbReference type="ChEBI" id="CHEBI:15562"/>
        <dbReference type="ChEBI" id="CHEBI:30031"/>
        <dbReference type="ChEBI" id="CHEBI:36655"/>
        <dbReference type="EC" id="4.1.3.1"/>
    </reaction>
</comment>
<comment type="cofactor">
    <cofactor evidence="1">
        <name>Mg(2+)</name>
        <dbReference type="ChEBI" id="CHEBI:18420"/>
    </cofactor>
</comment>
<comment type="pathway">
    <text evidence="1">Carbohydrate metabolism; glyoxylate cycle; (S)-malate from isocitrate: step 1/2.</text>
</comment>
<comment type="subunit">
    <text evidence="1">Homotetramer.</text>
</comment>
<comment type="similarity">
    <text evidence="1">Belongs to the isocitrate lyase/PEP mutase superfamily. Isocitrate lyase family.</text>
</comment>
<comment type="sequence caution" evidence="3">
    <conflict type="erroneous initiation">
        <sequence resource="EMBL-CDS" id="AAN83398"/>
    </conflict>
    <text>Extended N-terminus.</text>
</comment>
<sequence length="434" mass="47522">MKTRTQQIEELQKEWTQPRWEGITRPYSAEDVVKLRGSVNPECTLAQLGAAKMWRLLHGESKKGYINSLGALTGGQALQQAKAGIEAVYLSGWQVAADANLAASMYPDQSLYPANSVPAVVERINNTFRRADQIQWSAGIEPGDPRYVDYFLPIVADAEAGFGGVLNAFELMKAMIEAGAAAVHFEDQLASVKKCGHMGGKVLVPTQEAIQKLVAARLAADVTGVPTLLVARTDADAADLITSDCDPYDSEFITGERTSEGFFRTHAGIEQAISRGLAYAPYADLVWCETSTPDLELARRFAQAIHAKYPGKLLAYNCSPSFNWQKNLDDKTIASFQQQLSDMGYKFQFITLAGIHSMWFNMFDLANAYAQGEGMKHYVEKVQQPEFAAAKDGYTFVSHQQEVGTGYFDKVTTIIQGGTSSVTALTGSTEESQF</sequence>
<reference key="1">
    <citation type="journal article" date="2002" name="Proc. Natl. Acad. Sci. U.S.A.">
        <title>Extensive mosaic structure revealed by the complete genome sequence of uropathogenic Escherichia coli.</title>
        <authorList>
            <person name="Welch R.A."/>
            <person name="Burland V."/>
            <person name="Plunkett G. III"/>
            <person name="Redford P."/>
            <person name="Roesch P."/>
            <person name="Rasko D."/>
            <person name="Buckles E.L."/>
            <person name="Liou S.-R."/>
            <person name="Boutin A."/>
            <person name="Hackett J."/>
            <person name="Stroud D."/>
            <person name="Mayhew G.F."/>
            <person name="Rose D.J."/>
            <person name="Zhou S."/>
            <person name="Schwartz D.C."/>
            <person name="Perna N.T."/>
            <person name="Mobley H.L.T."/>
            <person name="Donnenberg M.S."/>
            <person name="Blattner F.R."/>
        </authorList>
    </citation>
    <scope>NUCLEOTIDE SEQUENCE [LARGE SCALE GENOMIC DNA]</scope>
    <source>
        <strain>CFT073 / ATCC 700928 / UPEC</strain>
    </source>
</reference>
<evidence type="ECO:0000250" key="1">
    <source>
        <dbReference type="UniProtKB" id="P0A9G6"/>
    </source>
</evidence>
<evidence type="ECO:0000250" key="2">
    <source>
        <dbReference type="UniProtKB" id="P9WKK7"/>
    </source>
</evidence>
<evidence type="ECO:0000305" key="3"/>
<proteinExistence type="inferred from homology"/>
<gene>
    <name type="primary">aceA</name>
    <name type="ordered locus">c4972</name>
</gene>
<accession>P0A9G7</accession>
<accession>P05313</accession>
<dbReference type="EC" id="4.1.3.1" evidence="1"/>
<dbReference type="EMBL" id="AE014075">
    <property type="protein sequence ID" value="AAN83398.1"/>
    <property type="status" value="ALT_INIT"/>
    <property type="molecule type" value="Genomic_DNA"/>
</dbReference>
<dbReference type="RefSeq" id="WP_000857856.1">
    <property type="nucleotide sequence ID" value="NZ_CP051263.1"/>
</dbReference>
<dbReference type="SMR" id="P0A9G7"/>
<dbReference type="STRING" id="199310.c4972"/>
<dbReference type="GeneID" id="75204155"/>
<dbReference type="KEGG" id="ecc:c4972"/>
<dbReference type="eggNOG" id="COG2224">
    <property type="taxonomic scope" value="Bacteria"/>
</dbReference>
<dbReference type="HOGENOM" id="CLU_019214_2_0_6"/>
<dbReference type="UniPathway" id="UPA00703">
    <property type="reaction ID" value="UER00719"/>
</dbReference>
<dbReference type="Proteomes" id="UP000001410">
    <property type="component" value="Chromosome"/>
</dbReference>
<dbReference type="GO" id="GO:0004451">
    <property type="term" value="F:isocitrate lyase activity"/>
    <property type="evidence" value="ECO:0007669"/>
    <property type="project" value="UniProtKB-EC"/>
</dbReference>
<dbReference type="GO" id="GO:0046872">
    <property type="term" value="F:metal ion binding"/>
    <property type="evidence" value="ECO:0007669"/>
    <property type="project" value="UniProtKB-KW"/>
</dbReference>
<dbReference type="GO" id="GO:0006097">
    <property type="term" value="P:glyoxylate cycle"/>
    <property type="evidence" value="ECO:0007669"/>
    <property type="project" value="UniProtKB-UniPathway"/>
</dbReference>
<dbReference type="GO" id="GO:0006099">
    <property type="term" value="P:tricarboxylic acid cycle"/>
    <property type="evidence" value="ECO:0007669"/>
    <property type="project" value="UniProtKB-KW"/>
</dbReference>
<dbReference type="CDD" id="cd00377">
    <property type="entry name" value="ICL_PEPM"/>
    <property type="match status" value="1"/>
</dbReference>
<dbReference type="FunFam" id="3.20.20.60:FF:000005">
    <property type="entry name" value="Isocitrate lyase"/>
    <property type="match status" value="1"/>
</dbReference>
<dbReference type="Gene3D" id="3.20.20.60">
    <property type="entry name" value="Phosphoenolpyruvate-binding domains"/>
    <property type="match status" value="1"/>
</dbReference>
<dbReference type="InterPro" id="IPR039556">
    <property type="entry name" value="ICL/PEPM"/>
</dbReference>
<dbReference type="InterPro" id="IPR006254">
    <property type="entry name" value="Isocitrate_lyase"/>
</dbReference>
<dbReference type="InterPro" id="IPR018523">
    <property type="entry name" value="Isocitrate_lyase_ph_CS"/>
</dbReference>
<dbReference type="InterPro" id="IPR015813">
    <property type="entry name" value="Pyrv/PenolPyrv_kinase-like_dom"/>
</dbReference>
<dbReference type="InterPro" id="IPR040442">
    <property type="entry name" value="Pyrv_kinase-like_dom_sf"/>
</dbReference>
<dbReference type="NCBIfam" id="TIGR01346">
    <property type="entry name" value="isocit_lyase"/>
    <property type="match status" value="2"/>
</dbReference>
<dbReference type="NCBIfam" id="NF011645">
    <property type="entry name" value="PRK15063.1"/>
    <property type="match status" value="1"/>
</dbReference>
<dbReference type="PANTHER" id="PTHR21631:SF3">
    <property type="entry name" value="BIFUNCTIONAL GLYOXYLATE CYCLE PROTEIN"/>
    <property type="match status" value="1"/>
</dbReference>
<dbReference type="PANTHER" id="PTHR21631">
    <property type="entry name" value="ISOCITRATE LYASE/MALATE SYNTHASE"/>
    <property type="match status" value="1"/>
</dbReference>
<dbReference type="Pfam" id="PF00463">
    <property type="entry name" value="ICL"/>
    <property type="match status" value="2"/>
</dbReference>
<dbReference type="PIRSF" id="PIRSF001362">
    <property type="entry name" value="Isocit_lyase"/>
    <property type="match status" value="1"/>
</dbReference>
<dbReference type="SUPFAM" id="SSF51621">
    <property type="entry name" value="Phosphoenolpyruvate/pyruvate domain"/>
    <property type="match status" value="1"/>
</dbReference>
<dbReference type="PROSITE" id="PS00161">
    <property type="entry name" value="ISOCITRATE_LYASE"/>
    <property type="match status" value="1"/>
</dbReference>
<feature type="chain" id="PRO_0000068775" description="Isocitrate lyase">
    <location>
        <begin position="1"/>
        <end position="434"/>
    </location>
</feature>
<feature type="active site" description="Proton acceptor" evidence="1">
    <location>
        <position position="195"/>
    </location>
</feature>
<feature type="binding site" evidence="1">
    <location>
        <begin position="91"/>
        <end position="93"/>
    </location>
    <ligand>
        <name>substrate</name>
    </ligand>
</feature>
<feature type="binding site" evidence="1">
    <location>
        <position position="157"/>
    </location>
    <ligand>
        <name>Mg(2+)</name>
        <dbReference type="ChEBI" id="CHEBI:18420"/>
    </ligand>
</feature>
<feature type="binding site" evidence="2">
    <location>
        <begin position="196"/>
        <end position="197"/>
    </location>
    <ligand>
        <name>substrate</name>
    </ligand>
</feature>
<feature type="binding site" evidence="1">
    <location>
        <position position="232"/>
    </location>
    <ligand>
        <name>substrate</name>
    </ligand>
</feature>
<feature type="binding site" evidence="2">
    <location>
        <begin position="317"/>
        <end position="321"/>
    </location>
    <ligand>
        <name>substrate</name>
    </ligand>
</feature>
<feature type="binding site" evidence="2">
    <location>
        <position position="351"/>
    </location>
    <ligand>
        <name>substrate</name>
    </ligand>
</feature>
<name>ACEA_ECOL6</name>
<protein>
    <recommendedName>
        <fullName evidence="1">Isocitrate lyase</fullName>
        <shortName evidence="1">ICL</shortName>
        <ecNumber evidence="1">4.1.3.1</ecNumber>
    </recommendedName>
    <alternativeName>
        <fullName evidence="1">Isocitrase</fullName>
    </alternativeName>
    <alternativeName>
        <fullName evidence="1">Isocitratase</fullName>
    </alternativeName>
</protein>